<keyword id="KW-1185">Reference proteome</keyword>
<keyword id="KW-0687">Ribonucleoprotein</keyword>
<keyword id="KW-0689">Ribosomal protein</keyword>
<reference key="1">
    <citation type="journal article" date="2008" name="Proc. Natl. Acad. Sci. U.S.A.">
        <title>The genome of Cyanothece 51142, a unicellular diazotrophic cyanobacterium important in the marine nitrogen cycle.</title>
        <authorList>
            <person name="Welsh E.A."/>
            <person name="Liberton M."/>
            <person name="Stoeckel J."/>
            <person name="Loh T."/>
            <person name="Elvitigala T."/>
            <person name="Wang C."/>
            <person name="Wollam A."/>
            <person name="Fulton R.S."/>
            <person name="Clifton S.W."/>
            <person name="Jacobs J.M."/>
            <person name="Aurora R."/>
            <person name="Ghosh B.K."/>
            <person name="Sherman L.A."/>
            <person name="Smith R.D."/>
            <person name="Wilson R.K."/>
            <person name="Pakrasi H.B."/>
        </authorList>
    </citation>
    <scope>NUCLEOTIDE SEQUENCE [LARGE SCALE GENOMIC DNA]</scope>
    <source>
        <strain>ATCC 51142 / BH68</strain>
    </source>
</reference>
<feature type="chain" id="PRO_1000195970" description="Large ribosomal subunit protein bL32">
    <location>
        <begin position="1"/>
        <end position="58"/>
    </location>
</feature>
<feature type="region of interest" description="Disordered" evidence="2">
    <location>
        <begin position="1"/>
        <end position="22"/>
    </location>
</feature>
<feature type="region of interest" description="Disordered" evidence="2">
    <location>
        <begin position="39"/>
        <end position="58"/>
    </location>
</feature>
<organism>
    <name type="scientific">Crocosphaera subtropica (strain ATCC 51142 / BH68)</name>
    <name type="common">Cyanothece sp. (strain ATCC 51142)</name>
    <dbReference type="NCBI Taxonomy" id="43989"/>
    <lineage>
        <taxon>Bacteria</taxon>
        <taxon>Bacillati</taxon>
        <taxon>Cyanobacteriota</taxon>
        <taxon>Cyanophyceae</taxon>
        <taxon>Oscillatoriophycideae</taxon>
        <taxon>Chroococcales</taxon>
        <taxon>Aphanothecaceae</taxon>
        <taxon>Crocosphaera</taxon>
        <taxon>Crocosphaera subtropica</taxon>
    </lineage>
</organism>
<accession>B1WY20</accession>
<evidence type="ECO:0000255" key="1">
    <source>
        <dbReference type="HAMAP-Rule" id="MF_00340"/>
    </source>
</evidence>
<evidence type="ECO:0000256" key="2">
    <source>
        <dbReference type="SAM" id="MobiDB-lite"/>
    </source>
</evidence>
<evidence type="ECO:0000305" key="3"/>
<dbReference type="EMBL" id="CP000806">
    <property type="protein sequence ID" value="ACB52604.1"/>
    <property type="molecule type" value="Genomic_DNA"/>
</dbReference>
<dbReference type="RefSeq" id="WP_009547607.1">
    <property type="nucleotide sequence ID" value="NC_010546.1"/>
</dbReference>
<dbReference type="SMR" id="B1WY20"/>
<dbReference type="STRING" id="43989.cce_3256"/>
<dbReference type="KEGG" id="cyt:cce_3256"/>
<dbReference type="eggNOG" id="COG0333">
    <property type="taxonomic scope" value="Bacteria"/>
</dbReference>
<dbReference type="HOGENOM" id="CLU_199882_0_0_3"/>
<dbReference type="OrthoDB" id="541730at2"/>
<dbReference type="Proteomes" id="UP000001203">
    <property type="component" value="Chromosome circular"/>
</dbReference>
<dbReference type="GO" id="GO:0015934">
    <property type="term" value="C:large ribosomal subunit"/>
    <property type="evidence" value="ECO:0007669"/>
    <property type="project" value="InterPro"/>
</dbReference>
<dbReference type="GO" id="GO:0003735">
    <property type="term" value="F:structural constituent of ribosome"/>
    <property type="evidence" value="ECO:0007669"/>
    <property type="project" value="InterPro"/>
</dbReference>
<dbReference type="GO" id="GO:0006412">
    <property type="term" value="P:translation"/>
    <property type="evidence" value="ECO:0007669"/>
    <property type="project" value="UniProtKB-UniRule"/>
</dbReference>
<dbReference type="Gene3D" id="1.20.5.640">
    <property type="entry name" value="Single helix bin"/>
    <property type="match status" value="1"/>
</dbReference>
<dbReference type="HAMAP" id="MF_00340">
    <property type="entry name" value="Ribosomal_bL32"/>
    <property type="match status" value="1"/>
</dbReference>
<dbReference type="InterPro" id="IPR002677">
    <property type="entry name" value="Ribosomal_bL32"/>
</dbReference>
<dbReference type="InterPro" id="IPR044958">
    <property type="entry name" value="Ribosomal_bL32_plant/cyanobact"/>
</dbReference>
<dbReference type="InterPro" id="IPR011332">
    <property type="entry name" value="Ribosomal_zn-bd"/>
</dbReference>
<dbReference type="NCBIfam" id="TIGR01031">
    <property type="entry name" value="rpmF_bact"/>
    <property type="match status" value="1"/>
</dbReference>
<dbReference type="PANTHER" id="PTHR36083">
    <property type="entry name" value="50S RIBOSOMAL PROTEIN L32, CHLOROPLASTIC"/>
    <property type="match status" value="1"/>
</dbReference>
<dbReference type="PANTHER" id="PTHR36083:SF1">
    <property type="entry name" value="LARGE RIBOSOMAL SUBUNIT PROTEIN BL32C"/>
    <property type="match status" value="1"/>
</dbReference>
<dbReference type="Pfam" id="PF01783">
    <property type="entry name" value="Ribosomal_L32p"/>
    <property type="match status" value="1"/>
</dbReference>
<dbReference type="SUPFAM" id="SSF57829">
    <property type="entry name" value="Zn-binding ribosomal proteins"/>
    <property type="match status" value="1"/>
</dbReference>
<name>RL32_CROS5</name>
<comment type="similarity">
    <text evidence="1">Belongs to the bacterial ribosomal protein bL32 family.</text>
</comment>
<proteinExistence type="inferred from homology"/>
<sequence>MAVPKKKTSNAKRDQRKAHWKRTAALEAQKALSLGKSVLSGRSNSFVYPQDEEEDDEE</sequence>
<protein>
    <recommendedName>
        <fullName evidence="1">Large ribosomal subunit protein bL32</fullName>
    </recommendedName>
    <alternativeName>
        <fullName evidence="3">50S ribosomal protein L32</fullName>
    </alternativeName>
</protein>
<gene>
    <name evidence="1" type="primary">rpmF</name>
    <name evidence="1" type="synonym">rpl32</name>
    <name type="ordered locus">cce_3256</name>
</gene>